<sequence>MNEFMKKFSLTKPIIQAPMAGGITKPRLASAVSNQGALGSLASGYLTPDLLEQQIKEIFELTDAPFQINVFVPLGLEMPPKDQIKKWKENIPLANQVNQFTSVQEEWDDFYQKIDLILKYKVKACSFTFDLPPEDAVKELKTAGCCLIGTASTVEEALLMEERGMDIVVLQGSEAGGHRGAFLPSKGESAVGLMALIPQAADALSVPVIAAGGMIDHRGVKAALTLGAQGVQIGSAFLICHESNAHPVHKQKILEANEADTKLTTLFSGKEARGIVNKWMEENEQFETQTLPYPYQNTLTKAMRQKASLQNNHDQMSLWAGQGIRSLTEEISVKQLLNQLCQEDIKI</sequence>
<evidence type="ECO:0000250" key="1">
    <source>
        <dbReference type="UniProtKB" id="D0V3Y4"/>
    </source>
</evidence>
<evidence type="ECO:0000250" key="2">
    <source>
        <dbReference type="UniProtKB" id="Q9HWH9"/>
    </source>
</evidence>
<evidence type="ECO:0000305" key="3"/>
<proteinExistence type="inferred from homology"/>
<protein>
    <recommendedName>
        <fullName>Probable nitronate monooxygenase</fullName>
        <shortName>NMO</shortName>
        <ecNumber evidence="2">1.13.12.-</ecNumber>
    </recommendedName>
    <alternativeName>
        <fullName>Propionate 3-nitronate monooxygenase</fullName>
        <shortName>P3N monooxygenase</shortName>
    </alternativeName>
</protein>
<accession>O05413</accession>
<accession>Q796A1</accession>
<name>NMO_BACSU</name>
<reference key="1">
    <citation type="journal article" date="1997" name="Microbiology">
        <title>Sequence of the Bacillus subtilis genome region in the vicinity of the lev operon reveals two new extracytoplasmic function RNA polymerase sigma factors SigV and SigZ.</title>
        <authorList>
            <person name="Sorokin A."/>
            <person name="Bolotin A."/>
            <person name="Purnelle B."/>
            <person name="Hilbert H."/>
            <person name="Lauber J."/>
            <person name="Duesterhoeft A."/>
            <person name="Ehrlich S.D."/>
        </authorList>
    </citation>
    <scope>NUCLEOTIDE SEQUENCE [GENOMIC DNA]</scope>
    <source>
        <strain>168</strain>
    </source>
</reference>
<reference key="2">
    <citation type="journal article" date="1997" name="Nature">
        <title>The complete genome sequence of the Gram-positive bacterium Bacillus subtilis.</title>
        <authorList>
            <person name="Kunst F."/>
            <person name="Ogasawara N."/>
            <person name="Moszer I."/>
            <person name="Albertini A.M."/>
            <person name="Alloni G."/>
            <person name="Azevedo V."/>
            <person name="Bertero M.G."/>
            <person name="Bessieres P."/>
            <person name="Bolotin A."/>
            <person name="Borchert S."/>
            <person name="Borriss R."/>
            <person name="Boursier L."/>
            <person name="Brans A."/>
            <person name="Braun M."/>
            <person name="Brignell S.C."/>
            <person name="Bron S."/>
            <person name="Brouillet S."/>
            <person name="Bruschi C.V."/>
            <person name="Caldwell B."/>
            <person name="Capuano V."/>
            <person name="Carter N.M."/>
            <person name="Choi S.-K."/>
            <person name="Codani J.-J."/>
            <person name="Connerton I.F."/>
            <person name="Cummings N.J."/>
            <person name="Daniel R.A."/>
            <person name="Denizot F."/>
            <person name="Devine K.M."/>
            <person name="Duesterhoeft A."/>
            <person name="Ehrlich S.D."/>
            <person name="Emmerson P.T."/>
            <person name="Entian K.-D."/>
            <person name="Errington J."/>
            <person name="Fabret C."/>
            <person name="Ferrari E."/>
            <person name="Foulger D."/>
            <person name="Fritz C."/>
            <person name="Fujita M."/>
            <person name="Fujita Y."/>
            <person name="Fuma S."/>
            <person name="Galizzi A."/>
            <person name="Galleron N."/>
            <person name="Ghim S.-Y."/>
            <person name="Glaser P."/>
            <person name="Goffeau A."/>
            <person name="Golightly E.J."/>
            <person name="Grandi G."/>
            <person name="Guiseppi G."/>
            <person name="Guy B.J."/>
            <person name="Haga K."/>
            <person name="Haiech J."/>
            <person name="Harwood C.R."/>
            <person name="Henaut A."/>
            <person name="Hilbert H."/>
            <person name="Holsappel S."/>
            <person name="Hosono S."/>
            <person name="Hullo M.-F."/>
            <person name="Itaya M."/>
            <person name="Jones L.-M."/>
            <person name="Joris B."/>
            <person name="Karamata D."/>
            <person name="Kasahara Y."/>
            <person name="Klaerr-Blanchard M."/>
            <person name="Klein C."/>
            <person name="Kobayashi Y."/>
            <person name="Koetter P."/>
            <person name="Koningstein G."/>
            <person name="Krogh S."/>
            <person name="Kumano M."/>
            <person name="Kurita K."/>
            <person name="Lapidus A."/>
            <person name="Lardinois S."/>
            <person name="Lauber J."/>
            <person name="Lazarevic V."/>
            <person name="Lee S.-M."/>
            <person name="Levine A."/>
            <person name="Liu H."/>
            <person name="Masuda S."/>
            <person name="Mauel C."/>
            <person name="Medigue C."/>
            <person name="Medina N."/>
            <person name="Mellado R.P."/>
            <person name="Mizuno M."/>
            <person name="Moestl D."/>
            <person name="Nakai S."/>
            <person name="Noback M."/>
            <person name="Noone D."/>
            <person name="O'Reilly M."/>
            <person name="Ogawa K."/>
            <person name="Ogiwara A."/>
            <person name="Oudega B."/>
            <person name="Park S.-H."/>
            <person name="Parro V."/>
            <person name="Pohl T.M."/>
            <person name="Portetelle D."/>
            <person name="Porwollik S."/>
            <person name="Prescott A.M."/>
            <person name="Presecan E."/>
            <person name="Pujic P."/>
            <person name="Purnelle B."/>
            <person name="Rapoport G."/>
            <person name="Rey M."/>
            <person name="Reynolds S."/>
            <person name="Rieger M."/>
            <person name="Rivolta C."/>
            <person name="Rocha E."/>
            <person name="Roche B."/>
            <person name="Rose M."/>
            <person name="Sadaie Y."/>
            <person name="Sato T."/>
            <person name="Scanlan E."/>
            <person name="Schleich S."/>
            <person name="Schroeter R."/>
            <person name="Scoffone F."/>
            <person name="Sekiguchi J."/>
            <person name="Sekowska A."/>
            <person name="Seror S.J."/>
            <person name="Serror P."/>
            <person name="Shin B.-S."/>
            <person name="Soldo B."/>
            <person name="Sorokin A."/>
            <person name="Tacconi E."/>
            <person name="Takagi T."/>
            <person name="Takahashi H."/>
            <person name="Takemaru K."/>
            <person name="Takeuchi M."/>
            <person name="Tamakoshi A."/>
            <person name="Tanaka T."/>
            <person name="Terpstra P."/>
            <person name="Tognoni A."/>
            <person name="Tosato V."/>
            <person name="Uchiyama S."/>
            <person name="Vandenbol M."/>
            <person name="Vannier F."/>
            <person name="Vassarotti A."/>
            <person name="Viari A."/>
            <person name="Wambutt R."/>
            <person name="Wedler E."/>
            <person name="Wedler H."/>
            <person name="Weitzenegger T."/>
            <person name="Winters P."/>
            <person name="Wipat A."/>
            <person name="Yamamoto H."/>
            <person name="Yamane K."/>
            <person name="Yasumoto K."/>
            <person name="Yata K."/>
            <person name="Yoshida K."/>
            <person name="Yoshikawa H.-F."/>
            <person name="Zumstein E."/>
            <person name="Yoshikawa H."/>
            <person name="Danchin A."/>
        </authorList>
    </citation>
    <scope>NUCLEOTIDE SEQUENCE [LARGE SCALE GENOMIC DNA]</scope>
    <source>
        <strain>168</strain>
    </source>
</reference>
<comment type="function">
    <text evidence="2">Nitronate monooxygenase that uses molecular oxygen to catalyze the oxidative denitrification of alkyl nitronates. Acts on propionate 3-nitronate (P3N), the presumed physiological substrate. Probably functions in the detoxification of P3N, a metabolic poison produced by plants and fungi as a defense mechanism.</text>
</comment>
<comment type="catalytic activity">
    <reaction evidence="1">
        <text>3 propionate 3-nitronate + 3 O2 + H2O = 3 3-oxopropanoate + 2 nitrate + nitrite + H2O2 + 3 H(+)</text>
        <dbReference type="Rhea" id="RHEA:57332"/>
        <dbReference type="ChEBI" id="CHEBI:15377"/>
        <dbReference type="ChEBI" id="CHEBI:15378"/>
        <dbReference type="ChEBI" id="CHEBI:15379"/>
        <dbReference type="ChEBI" id="CHEBI:16240"/>
        <dbReference type="ChEBI" id="CHEBI:16301"/>
        <dbReference type="ChEBI" id="CHEBI:17632"/>
        <dbReference type="ChEBI" id="CHEBI:33190"/>
        <dbReference type="ChEBI" id="CHEBI:136067"/>
    </reaction>
</comment>
<comment type="cofactor">
    <cofactor evidence="2">
        <name>FMN</name>
        <dbReference type="ChEBI" id="CHEBI:58210"/>
    </cofactor>
    <text evidence="2">Binds 1 FMN per subunit.</text>
</comment>
<comment type="miscellaneous">
    <text evidence="3">P3N is a potent irreversible inhibitor of the key enzyme succinate dehydrogenase in the Krebs cycle and electron transport chain. P3N has been shown to be a toxic metabolite to bacteria, plants, fungi, mammals or any organism that uses succinate dehydrogenase.</text>
</comment>
<comment type="similarity">
    <text evidence="3">Belongs to the nitronate monooxygenase family. NMO class I subfamily.</text>
</comment>
<keyword id="KW-0216">Detoxification</keyword>
<keyword id="KW-0285">Flavoprotein</keyword>
<keyword id="KW-0288">FMN</keyword>
<keyword id="KW-0503">Monooxygenase</keyword>
<keyword id="KW-0547">Nucleotide-binding</keyword>
<keyword id="KW-0560">Oxidoreductase</keyword>
<keyword id="KW-1185">Reference proteome</keyword>
<feature type="chain" id="PRO_0000360890" description="Probable nitronate monooxygenase">
    <location>
        <begin position="1"/>
        <end position="347"/>
    </location>
</feature>
<feature type="binding site" evidence="2">
    <location>
        <position position="69"/>
    </location>
    <ligand>
        <name>FMN</name>
        <dbReference type="ChEBI" id="CHEBI:58210"/>
    </ligand>
</feature>
<feature type="binding site" evidence="2">
    <location>
        <position position="171"/>
    </location>
    <ligand>
        <name>FMN</name>
        <dbReference type="ChEBI" id="CHEBI:58210"/>
    </ligand>
</feature>
<feature type="binding site" evidence="2">
    <location>
        <position position="176"/>
    </location>
    <ligand>
        <name>FMN</name>
        <dbReference type="ChEBI" id="CHEBI:58210"/>
    </ligand>
</feature>
<feature type="binding site" evidence="2">
    <location>
        <position position="213"/>
    </location>
    <ligand>
        <name>FMN</name>
        <dbReference type="ChEBI" id="CHEBI:58210"/>
    </ligand>
</feature>
<feature type="binding site" evidence="2">
    <location>
        <begin position="232"/>
        <end position="235"/>
    </location>
    <ligand>
        <name>FMN</name>
        <dbReference type="ChEBI" id="CHEBI:58210"/>
    </ligand>
</feature>
<organism>
    <name type="scientific">Bacillus subtilis (strain 168)</name>
    <dbReference type="NCBI Taxonomy" id="224308"/>
    <lineage>
        <taxon>Bacteria</taxon>
        <taxon>Bacillati</taxon>
        <taxon>Bacillota</taxon>
        <taxon>Bacilli</taxon>
        <taxon>Bacillales</taxon>
        <taxon>Bacillaceae</taxon>
        <taxon>Bacillus</taxon>
    </lineage>
</organism>
<gene>
    <name type="primary">yrpB</name>
    <name type="ordered locus">BSU26800</name>
</gene>
<dbReference type="EC" id="1.13.12.-" evidence="2"/>
<dbReference type="EMBL" id="U93875">
    <property type="protein sequence ID" value="AAB80891.1"/>
    <property type="molecule type" value="Genomic_DNA"/>
</dbReference>
<dbReference type="EMBL" id="AL009126">
    <property type="protein sequence ID" value="CAB14621.1"/>
    <property type="molecule type" value="Genomic_DNA"/>
</dbReference>
<dbReference type="PIR" id="B69978">
    <property type="entry name" value="B69978"/>
</dbReference>
<dbReference type="RefSeq" id="NP_390557.1">
    <property type="nucleotide sequence ID" value="NC_000964.3"/>
</dbReference>
<dbReference type="RefSeq" id="WP_003229861.1">
    <property type="nucleotide sequence ID" value="NZ_OZ025638.1"/>
</dbReference>
<dbReference type="SMR" id="O05413"/>
<dbReference type="FunCoup" id="O05413">
    <property type="interactions" value="446"/>
</dbReference>
<dbReference type="STRING" id="224308.BSU26800"/>
<dbReference type="PaxDb" id="224308-BSU26800"/>
<dbReference type="EnsemblBacteria" id="CAB14621">
    <property type="protein sequence ID" value="CAB14621"/>
    <property type="gene ID" value="BSU_26800"/>
</dbReference>
<dbReference type="GeneID" id="936455"/>
<dbReference type="KEGG" id="bsu:BSU26800"/>
<dbReference type="PATRIC" id="fig|224308.179.peg.2911"/>
<dbReference type="eggNOG" id="COG2070">
    <property type="taxonomic scope" value="Bacteria"/>
</dbReference>
<dbReference type="InParanoid" id="O05413"/>
<dbReference type="OrthoDB" id="9778912at2"/>
<dbReference type="PhylomeDB" id="O05413"/>
<dbReference type="BioCyc" id="BSUB:BSU26800-MONOMER"/>
<dbReference type="Proteomes" id="UP000001570">
    <property type="component" value="Chromosome"/>
</dbReference>
<dbReference type="GO" id="GO:0018580">
    <property type="term" value="F:nitronate monooxygenase activity"/>
    <property type="evidence" value="ECO:0000318"/>
    <property type="project" value="GO_Central"/>
</dbReference>
<dbReference type="GO" id="GO:0000166">
    <property type="term" value="F:nucleotide binding"/>
    <property type="evidence" value="ECO:0007669"/>
    <property type="project" value="UniProtKB-KW"/>
</dbReference>
<dbReference type="GO" id="GO:0009636">
    <property type="term" value="P:response to toxic substance"/>
    <property type="evidence" value="ECO:0007669"/>
    <property type="project" value="UniProtKB-KW"/>
</dbReference>
<dbReference type="CDD" id="cd04730">
    <property type="entry name" value="NPD_like"/>
    <property type="match status" value="1"/>
</dbReference>
<dbReference type="FunFam" id="3.20.20.70:FF:000154">
    <property type="entry name" value="Probable nitronate monooxygenase"/>
    <property type="match status" value="1"/>
</dbReference>
<dbReference type="Gene3D" id="3.20.20.70">
    <property type="entry name" value="Aldolase class I"/>
    <property type="match status" value="1"/>
</dbReference>
<dbReference type="InterPro" id="IPR013785">
    <property type="entry name" value="Aldolase_TIM"/>
</dbReference>
<dbReference type="InterPro" id="IPR004136">
    <property type="entry name" value="NMO"/>
</dbReference>
<dbReference type="PANTHER" id="PTHR42747">
    <property type="entry name" value="NITRONATE MONOOXYGENASE-RELATED"/>
    <property type="match status" value="1"/>
</dbReference>
<dbReference type="PANTHER" id="PTHR42747:SF3">
    <property type="entry name" value="NITRONATE MONOOXYGENASE-RELATED"/>
    <property type="match status" value="1"/>
</dbReference>
<dbReference type="Pfam" id="PF03060">
    <property type="entry name" value="NMO"/>
    <property type="match status" value="1"/>
</dbReference>
<dbReference type="SUPFAM" id="SSF51412">
    <property type="entry name" value="Inosine monophosphate dehydrogenase (IMPDH)"/>
    <property type="match status" value="1"/>
</dbReference>